<evidence type="ECO:0000255" key="1">
    <source>
        <dbReference type="HAMAP-Rule" id="MF_01261"/>
    </source>
</evidence>
<keyword id="KW-0067">ATP-binding</keyword>
<keyword id="KW-0378">Hydrolase</keyword>
<keyword id="KW-0460">Magnesium</keyword>
<keyword id="KW-0479">Metal-binding</keyword>
<keyword id="KW-0511">Multifunctional enzyme</keyword>
<keyword id="KW-0533">Nickel</keyword>
<keyword id="KW-0547">Nucleotide-binding</keyword>
<keyword id="KW-0548">Nucleotidyltransferase</keyword>
<keyword id="KW-0692">RNA repair</keyword>
<keyword id="KW-0694">RNA-binding</keyword>
<keyword id="KW-0808">Transferase</keyword>
<keyword id="KW-0819">tRNA processing</keyword>
<organism>
    <name type="scientific">Shewanella baltica (strain OS223)</name>
    <dbReference type="NCBI Taxonomy" id="407976"/>
    <lineage>
        <taxon>Bacteria</taxon>
        <taxon>Pseudomonadati</taxon>
        <taxon>Pseudomonadota</taxon>
        <taxon>Gammaproteobacteria</taxon>
        <taxon>Alteromonadales</taxon>
        <taxon>Shewanellaceae</taxon>
        <taxon>Shewanella</taxon>
    </lineage>
</organism>
<sequence>MKIYLVGGAVRDSLLNLPIKDKDYLVVGATPEQMLQLGYRQVGKDFPVFLHPKNQQEYALARTERKIGLGYGGFSCHASPDVTLEQDLLRRDLTINAIAQDEKGNLYDPFNGIEDLNARLLRHVSDAFVEDPLRILRVARFAARFHALGFHIAAETLALMRQISASDELNALTAERVWQEVDKSLGGPHPEVFFEVLHQCGALEVLFPEIFALFGVPQPEKWHPEIDTGVHTLMVLAQAALLTDDKSVRFAALVHDLGKALSPKEHLPKHHGHGQKGLPLIKALCTRLRVPNETRDLALLVSDQHQNVHQAFELRAETIVKIFDKADFWRKPERLTQLILACIADMRGRTGFENNPYPQGEYLTQCFLAANNVDIAAIIAAGFQGAEIKQALNLRRIEAVSQFKQKMQTKLPTDEQ</sequence>
<gene>
    <name evidence="1" type="primary">cca</name>
    <name type="ordered locus">Sbal223_3158</name>
</gene>
<accession>B8EBU8</accession>
<proteinExistence type="inferred from homology"/>
<comment type="function">
    <text evidence="1">Catalyzes the addition and repair of the essential 3'-terminal CCA sequence in tRNAs without using a nucleic acid template. Adds these three nucleotides in the order of C, C, and A to the tRNA nucleotide-73, using CTP and ATP as substrates and producing inorganic pyrophosphate. tRNA 3'-terminal CCA addition is required both for tRNA processing and repair. Also involved in tRNA surveillance by mediating tandem CCA addition to generate a CCACCA at the 3' terminus of unstable tRNAs. While stable tRNAs receive only 3'-terminal CCA, unstable tRNAs are marked with CCACCA and rapidly degraded.</text>
</comment>
<comment type="catalytic activity">
    <reaction evidence="1">
        <text>a tRNA precursor + 2 CTP + ATP = a tRNA with a 3' CCA end + 3 diphosphate</text>
        <dbReference type="Rhea" id="RHEA:14433"/>
        <dbReference type="Rhea" id="RHEA-COMP:10465"/>
        <dbReference type="Rhea" id="RHEA-COMP:10468"/>
        <dbReference type="ChEBI" id="CHEBI:30616"/>
        <dbReference type="ChEBI" id="CHEBI:33019"/>
        <dbReference type="ChEBI" id="CHEBI:37563"/>
        <dbReference type="ChEBI" id="CHEBI:74896"/>
        <dbReference type="ChEBI" id="CHEBI:83071"/>
        <dbReference type="EC" id="2.7.7.72"/>
    </reaction>
</comment>
<comment type="catalytic activity">
    <reaction evidence="1">
        <text>a tRNA with a 3' CCA end + 2 CTP + ATP = a tRNA with a 3' CCACCA end + 3 diphosphate</text>
        <dbReference type="Rhea" id="RHEA:76235"/>
        <dbReference type="Rhea" id="RHEA-COMP:10468"/>
        <dbReference type="Rhea" id="RHEA-COMP:18655"/>
        <dbReference type="ChEBI" id="CHEBI:30616"/>
        <dbReference type="ChEBI" id="CHEBI:33019"/>
        <dbReference type="ChEBI" id="CHEBI:37563"/>
        <dbReference type="ChEBI" id="CHEBI:83071"/>
        <dbReference type="ChEBI" id="CHEBI:195187"/>
    </reaction>
    <physiologicalReaction direction="left-to-right" evidence="1">
        <dbReference type="Rhea" id="RHEA:76236"/>
    </physiologicalReaction>
</comment>
<comment type="cofactor">
    <cofactor evidence="1">
        <name>Mg(2+)</name>
        <dbReference type="ChEBI" id="CHEBI:18420"/>
    </cofactor>
    <text evidence="1">Magnesium is required for nucleotidyltransferase activity.</text>
</comment>
<comment type="cofactor">
    <cofactor evidence="1">
        <name>Ni(2+)</name>
        <dbReference type="ChEBI" id="CHEBI:49786"/>
    </cofactor>
    <text evidence="1">Nickel for phosphatase activity.</text>
</comment>
<comment type="subunit">
    <text evidence="1">Monomer. Can also form homodimers and oligomers.</text>
</comment>
<comment type="domain">
    <text evidence="1">Comprises two domains: an N-terminal domain containing the nucleotidyltransferase activity and a C-terminal HD domain associated with both phosphodiesterase and phosphatase activities.</text>
</comment>
<comment type="miscellaneous">
    <text evidence="1">A single active site specifically recognizes both ATP and CTP and is responsible for their addition.</text>
</comment>
<comment type="similarity">
    <text evidence="1">Belongs to the tRNA nucleotidyltransferase/poly(A) polymerase family. Bacterial CCA-adding enzyme type 1 subfamily.</text>
</comment>
<reference key="1">
    <citation type="submission" date="2008-12" db="EMBL/GenBank/DDBJ databases">
        <title>Complete sequence of chromosome of Shewanella baltica OS223.</title>
        <authorList>
            <consortium name="US DOE Joint Genome Institute"/>
            <person name="Lucas S."/>
            <person name="Copeland A."/>
            <person name="Lapidus A."/>
            <person name="Glavina del Rio T."/>
            <person name="Dalin E."/>
            <person name="Tice H."/>
            <person name="Bruce D."/>
            <person name="Goodwin L."/>
            <person name="Pitluck S."/>
            <person name="Chertkov O."/>
            <person name="Meincke L."/>
            <person name="Brettin T."/>
            <person name="Detter J.C."/>
            <person name="Han C."/>
            <person name="Kuske C.R."/>
            <person name="Larimer F."/>
            <person name="Land M."/>
            <person name="Hauser L."/>
            <person name="Kyrpides N."/>
            <person name="Ovchinnikova G."/>
            <person name="Brettar I."/>
            <person name="Rodrigues J."/>
            <person name="Konstantinidis K."/>
            <person name="Tiedje J."/>
        </authorList>
    </citation>
    <scope>NUCLEOTIDE SEQUENCE [LARGE SCALE GENOMIC DNA]</scope>
    <source>
        <strain>OS223</strain>
    </source>
</reference>
<protein>
    <recommendedName>
        <fullName evidence="1">Multifunctional CCA protein</fullName>
    </recommendedName>
    <domain>
        <recommendedName>
            <fullName evidence="1">CCA-adding enzyme</fullName>
            <ecNumber evidence="1">2.7.7.72</ecNumber>
        </recommendedName>
        <alternativeName>
            <fullName evidence="1">CCA tRNA nucleotidyltransferase</fullName>
        </alternativeName>
        <alternativeName>
            <fullName evidence="1">tRNA CCA-pyrophosphorylase</fullName>
        </alternativeName>
        <alternativeName>
            <fullName evidence="1">tRNA adenylyl-/cytidylyl-transferase</fullName>
        </alternativeName>
        <alternativeName>
            <fullName evidence="1">tRNA nucleotidyltransferase</fullName>
        </alternativeName>
        <alternativeName>
            <fullName evidence="1">tRNA-NT</fullName>
        </alternativeName>
    </domain>
    <domain>
        <recommendedName>
            <fullName evidence="1">2'-nucleotidase</fullName>
            <ecNumber evidence="1">3.1.3.-</ecNumber>
        </recommendedName>
    </domain>
    <domain>
        <recommendedName>
            <fullName evidence="1">2',3'-cyclic phosphodiesterase</fullName>
            <ecNumber evidence="1">3.1.4.-</ecNumber>
        </recommendedName>
    </domain>
    <domain>
        <recommendedName>
            <fullName evidence="1">Phosphatase</fullName>
            <ecNumber evidence="1">3.1.3.-</ecNumber>
        </recommendedName>
    </domain>
</protein>
<dbReference type="EC" id="2.7.7.72" evidence="1"/>
<dbReference type="EC" id="3.1.3.-" evidence="1"/>
<dbReference type="EC" id="3.1.4.-" evidence="1"/>
<dbReference type="EMBL" id="CP001252">
    <property type="protein sequence ID" value="ACK47643.1"/>
    <property type="molecule type" value="Genomic_DNA"/>
</dbReference>
<dbReference type="RefSeq" id="WP_012588274.1">
    <property type="nucleotide sequence ID" value="NC_011663.1"/>
</dbReference>
<dbReference type="SMR" id="B8EBU8"/>
<dbReference type="KEGG" id="sbp:Sbal223_3158"/>
<dbReference type="HOGENOM" id="CLU_015961_1_1_6"/>
<dbReference type="Proteomes" id="UP000002507">
    <property type="component" value="Chromosome"/>
</dbReference>
<dbReference type="GO" id="GO:0005524">
    <property type="term" value="F:ATP binding"/>
    <property type="evidence" value="ECO:0007669"/>
    <property type="project" value="UniProtKB-UniRule"/>
</dbReference>
<dbReference type="GO" id="GO:0004810">
    <property type="term" value="F:CCA tRNA nucleotidyltransferase activity"/>
    <property type="evidence" value="ECO:0007669"/>
    <property type="project" value="UniProtKB-UniRule"/>
</dbReference>
<dbReference type="GO" id="GO:0004112">
    <property type="term" value="F:cyclic-nucleotide phosphodiesterase activity"/>
    <property type="evidence" value="ECO:0007669"/>
    <property type="project" value="UniProtKB-UniRule"/>
</dbReference>
<dbReference type="GO" id="GO:0000287">
    <property type="term" value="F:magnesium ion binding"/>
    <property type="evidence" value="ECO:0007669"/>
    <property type="project" value="UniProtKB-UniRule"/>
</dbReference>
<dbReference type="GO" id="GO:0016791">
    <property type="term" value="F:phosphatase activity"/>
    <property type="evidence" value="ECO:0007669"/>
    <property type="project" value="UniProtKB-UniRule"/>
</dbReference>
<dbReference type="GO" id="GO:0000049">
    <property type="term" value="F:tRNA binding"/>
    <property type="evidence" value="ECO:0007669"/>
    <property type="project" value="UniProtKB-UniRule"/>
</dbReference>
<dbReference type="GO" id="GO:0042245">
    <property type="term" value="P:RNA repair"/>
    <property type="evidence" value="ECO:0007669"/>
    <property type="project" value="UniProtKB-KW"/>
</dbReference>
<dbReference type="GO" id="GO:0001680">
    <property type="term" value="P:tRNA 3'-terminal CCA addition"/>
    <property type="evidence" value="ECO:0007669"/>
    <property type="project" value="UniProtKB-UniRule"/>
</dbReference>
<dbReference type="CDD" id="cd00077">
    <property type="entry name" value="HDc"/>
    <property type="match status" value="1"/>
</dbReference>
<dbReference type="CDD" id="cd05398">
    <property type="entry name" value="NT_ClassII-CCAase"/>
    <property type="match status" value="1"/>
</dbReference>
<dbReference type="FunFam" id="1.10.3090.10:FF:000001">
    <property type="entry name" value="Multifunctional CCA protein"/>
    <property type="match status" value="1"/>
</dbReference>
<dbReference type="Gene3D" id="3.30.460.10">
    <property type="entry name" value="Beta Polymerase, domain 2"/>
    <property type="match status" value="1"/>
</dbReference>
<dbReference type="Gene3D" id="1.10.3090.10">
    <property type="entry name" value="cca-adding enzyme, domain 2"/>
    <property type="match status" value="1"/>
</dbReference>
<dbReference type="HAMAP" id="MF_01261">
    <property type="entry name" value="CCA_bact_type1"/>
    <property type="match status" value="1"/>
</dbReference>
<dbReference type="HAMAP" id="MF_01262">
    <property type="entry name" value="CCA_bact_type2"/>
    <property type="match status" value="1"/>
</dbReference>
<dbReference type="InterPro" id="IPR012006">
    <property type="entry name" value="CCA_bact"/>
</dbReference>
<dbReference type="InterPro" id="IPR003607">
    <property type="entry name" value="HD/PDEase_dom"/>
</dbReference>
<dbReference type="InterPro" id="IPR006674">
    <property type="entry name" value="HD_domain"/>
</dbReference>
<dbReference type="InterPro" id="IPR043519">
    <property type="entry name" value="NT_sf"/>
</dbReference>
<dbReference type="InterPro" id="IPR002646">
    <property type="entry name" value="PolA_pol_head_dom"/>
</dbReference>
<dbReference type="InterPro" id="IPR032828">
    <property type="entry name" value="PolyA_RNA-bd"/>
</dbReference>
<dbReference type="InterPro" id="IPR050124">
    <property type="entry name" value="tRNA_CCA-adding_enzyme"/>
</dbReference>
<dbReference type="NCBIfam" id="NF008137">
    <property type="entry name" value="PRK10885.1"/>
    <property type="match status" value="1"/>
</dbReference>
<dbReference type="PANTHER" id="PTHR47545">
    <property type="entry name" value="MULTIFUNCTIONAL CCA PROTEIN"/>
    <property type="match status" value="1"/>
</dbReference>
<dbReference type="PANTHER" id="PTHR47545:SF1">
    <property type="entry name" value="MULTIFUNCTIONAL CCA PROTEIN"/>
    <property type="match status" value="1"/>
</dbReference>
<dbReference type="Pfam" id="PF01966">
    <property type="entry name" value="HD"/>
    <property type="match status" value="1"/>
</dbReference>
<dbReference type="Pfam" id="PF01743">
    <property type="entry name" value="PolyA_pol"/>
    <property type="match status" value="1"/>
</dbReference>
<dbReference type="Pfam" id="PF12627">
    <property type="entry name" value="PolyA_pol_RNAbd"/>
    <property type="match status" value="1"/>
</dbReference>
<dbReference type="PIRSF" id="PIRSF000813">
    <property type="entry name" value="CCA_bact"/>
    <property type="match status" value="1"/>
</dbReference>
<dbReference type="SUPFAM" id="SSF81301">
    <property type="entry name" value="Nucleotidyltransferase"/>
    <property type="match status" value="1"/>
</dbReference>
<dbReference type="SUPFAM" id="SSF81891">
    <property type="entry name" value="Poly A polymerase C-terminal region-like"/>
    <property type="match status" value="1"/>
</dbReference>
<dbReference type="PROSITE" id="PS51831">
    <property type="entry name" value="HD"/>
    <property type="match status" value="1"/>
</dbReference>
<name>CCA_SHEB2</name>
<feature type="chain" id="PRO_1000165124" description="Multifunctional CCA protein">
    <location>
        <begin position="1"/>
        <end position="416"/>
    </location>
</feature>
<feature type="domain" description="HD" evidence="1">
    <location>
        <begin position="228"/>
        <end position="329"/>
    </location>
</feature>
<feature type="binding site" evidence="1">
    <location>
        <position position="8"/>
    </location>
    <ligand>
        <name>ATP</name>
        <dbReference type="ChEBI" id="CHEBI:30616"/>
    </ligand>
</feature>
<feature type="binding site" evidence="1">
    <location>
        <position position="8"/>
    </location>
    <ligand>
        <name>CTP</name>
        <dbReference type="ChEBI" id="CHEBI:37563"/>
    </ligand>
</feature>
<feature type="binding site" evidence="1">
    <location>
        <position position="11"/>
    </location>
    <ligand>
        <name>ATP</name>
        <dbReference type="ChEBI" id="CHEBI:30616"/>
    </ligand>
</feature>
<feature type="binding site" evidence="1">
    <location>
        <position position="11"/>
    </location>
    <ligand>
        <name>CTP</name>
        <dbReference type="ChEBI" id="CHEBI:37563"/>
    </ligand>
</feature>
<feature type="binding site" evidence="1">
    <location>
        <position position="21"/>
    </location>
    <ligand>
        <name>Mg(2+)</name>
        <dbReference type="ChEBI" id="CHEBI:18420"/>
    </ligand>
</feature>
<feature type="binding site" evidence="1">
    <location>
        <position position="23"/>
    </location>
    <ligand>
        <name>Mg(2+)</name>
        <dbReference type="ChEBI" id="CHEBI:18420"/>
    </ligand>
</feature>
<feature type="binding site" evidence="1">
    <location>
        <position position="91"/>
    </location>
    <ligand>
        <name>ATP</name>
        <dbReference type="ChEBI" id="CHEBI:30616"/>
    </ligand>
</feature>
<feature type="binding site" evidence="1">
    <location>
        <position position="91"/>
    </location>
    <ligand>
        <name>CTP</name>
        <dbReference type="ChEBI" id="CHEBI:37563"/>
    </ligand>
</feature>
<feature type="binding site" evidence="1">
    <location>
        <position position="137"/>
    </location>
    <ligand>
        <name>ATP</name>
        <dbReference type="ChEBI" id="CHEBI:30616"/>
    </ligand>
</feature>
<feature type="binding site" evidence="1">
    <location>
        <position position="137"/>
    </location>
    <ligand>
        <name>CTP</name>
        <dbReference type="ChEBI" id="CHEBI:37563"/>
    </ligand>
</feature>
<feature type="binding site" evidence="1">
    <location>
        <position position="140"/>
    </location>
    <ligand>
        <name>ATP</name>
        <dbReference type="ChEBI" id="CHEBI:30616"/>
    </ligand>
</feature>
<feature type="binding site" evidence="1">
    <location>
        <position position="140"/>
    </location>
    <ligand>
        <name>CTP</name>
        <dbReference type="ChEBI" id="CHEBI:37563"/>
    </ligand>
</feature>